<proteinExistence type="evidence at transcript level"/>
<accession>Q2QM55</accession>
<accession>A0A0P0YCA2</accession>
<sequence>MATAAAASLQYALHGAASASAKPRSAAPGRSVRVVAARRSVRARGGAVVARAAVTASADATAESKSGGHEVLLFEALREALIEEMKEDPTVCVFGEDVGHYGGSYKVTKGLAEMFGDLRVLDTPIAENSFAGMGVGAAMKGLRPIVEGMNMGFLLLAYNQISNNCGMLHYTSGGQFKIPIVIRGPGGVGRQLGAEHSQRLESYFQSIPGLQMVACSTPYNAKGLMKAAIRSENPVVLFEHVLLYNLKEKIPDEEYICCLEEAEMVRPGEHVTILTYSRMRYHVMQAAKTLVNKGYDPEVIDIRSLKPFDLHTIGNSIKKTHRVLIVEECMRTGGIGASLRSAIIDNFWDYLDAPIMCLSSQDVPTPYAATLEDATVVQPAQIVAAVEQICQ</sequence>
<organism>
    <name type="scientific">Oryza sativa subsp. japonica</name>
    <name type="common">Rice</name>
    <dbReference type="NCBI Taxonomy" id="39947"/>
    <lineage>
        <taxon>Eukaryota</taxon>
        <taxon>Viridiplantae</taxon>
        <taxon>Streptophyta</taxon>
        <taxon>Embryophyta</taxon>
        <taxon>Tracheophyta</taxon>
        <taxon>Spermatophyta</taxon>
        <taxon>Magnoliopsida</taxon>
        <taxon>Liliopsida</taxon>
        <taxon>Poales</taxon>
        <taxon>Poaceae</taxon>
        <taxon>BOP clade</taxon>
        <taxon>Oryzoideae</taxon>
        <taxon>Oryzeae</taxon>
        <taxon>Oryzinae</taxon>
        <taxon>Oryza</taxon>
        <taxon>Oryza sativa</taxon>
    </lineage>
</organism>
<feature type="transit peptide" description="Chloroplast" evidence="3">
    <location>
        <begin position="1"/>
        <end position="35"/>
    </location>
</feature>
<feature type="chain" id="PRO_0000421375" description="Pyruvate dehydrogenase E1 component subunit beta-3, chloroplastic">
    <location>
        <begin position="36"/>
        <end position="391"/>
    </location>
</feature>
<feature type="binding site" evidence="2">
    <location>
        <position position="127"/>
    </location>
    <ligand>
        <name>thiamine diphosphate</name>
        <dbReference type="ChEBI" id="CHEBI:58937"/>
        <note>ligand shared with alpha subunit</note>
    </ligand>
</feature>
<feature type="binding site" evidence="2">
    <location>
        <position position="180"/>
    </location>
    <ligand>
        <name>K(+)</name>
        <dbReference type="ChEBI" id="CHEBI:29103"/>
        <note>structural</note>
    </ligand>
</feature>
<feature type="binding site" evidence="2">
    <location>
        <position position="228"/>
    </location>
    <ligand>
        <name>K(+)</name>
        <dbReference type="ChEBI" id="CHEBI:29103"/>
        <note>structural</note>
    </ligand>
</feature>
<feature type="binding site" evidence="2">
    <location>
        <position position="229"/>
    </location>
    <ligand>
        <name>K(+)</name>
        <dbReference type="ChEBI" id="CHEBI:29103"/>
        <note>structural</note>
    </ligand>
</feature>
<feature type="binding site" evidence="2">
    <location>
        <position position="233"/>
    </location>
    <ligand>
        <name>K(+)</name>
        <dbReference type="ChEBI" id="CHEBI:29103"/>
        <note>structural</note>
    </ligand>
</feature>
<name>ODPB3_ORYSJ</name>
<evidence type="ECO:0000250" key="1"/>
<evidence type="ECO:0000250" key="2">
    <source>
        <dbReference type="UniProtKB" id="P11177"/>
    </source>
</evidence>
<evidence type="ECO:0000255" key="3"/>
<evidence type="ECO:0000305" key="4"/>
<reference key="1">
    <citation type="journal article" date="2005" name="BMC Biol.">
        <title>The sequence of rice chromosomes 11 and 12, rich in disease resistance genes and recent gene duplications.</title>
        <authorList>
            <consortium name="The rice chromosomes 11 and 12 sequencing consortia"/>
        </authorList>
    </citation>
    <scope>NUCLEOTIDE SEQUENCE [LARGE SCALE GENOMIC DNA]</scope>
    <source>
        <strain>cv. Nipponbare</strain>
    </source>
</reference>
<reference key="2">
    <citation type="journal article" date="2005" name="Nature">
        <title>The map-based sequence of the rice genome.</title>
        <authorList>
            <consortium name="International rice genome sequencing project (IRGSP)"/>
        </authorList>
    </citation>
    <scope>NUCLEOTIDE SEQUENCE [LARGE SCALE GENOMIC DNA]</scope>
    <source>
        <strain>cv. Nipponbare</strain>
    </source>
</reference>
<reference key="3">
    <citation type="journal article" date="2008" name="Nucleic Acids Res.">
        <title>The rice annotation project database (RAP-DB): 2008 update.</title>
        <authorList>
            <consortium name="The rice annotation project (RAP)"/>
        </authorList>
    </citation>
    <scope>GENOME REANNOTATION</scope>
    <source>
        <strain>cv. Nipponbare</strain>
    </source>
</reference>
<reference key="4">
    <citation type="journal article" date="2013" name="Rice">
        <title>Improvement of the Oryza sativa Nipponbare reference genome using next generation sequence and optical map data.</title>
        <authorList>
            <person name="Kawahara Y."/>
            <person name="de la Bastide M."/>
            <person name="Hamilton J.P."/>
            <person name="Kanamori H."/>
            <person name="McCombie W.R."/>
            <person name="Ouyang S."/>
            <person name="Schwartz D.C."/>
            <person name="Tanaka T."/>
            <person name="Wu J."/>
            <person name="Zhou S."/>
            <person name="Childs K.L."/>
            <person name="Davidson R.M."/>
            <person name="Lin H."/>
            <person name="Quesada-Ocampo L."/>
            <person name="Vaillancourt B."/>
            <person name="Sakai H."/>
            <person name="Lee S.S."/>
            <person name="Kim J."/>
            <person name="Numa H."/>
            <person name="Itoh T."/>
            <person name="Buell C.R."/>
            <person name="Matsumoto T."/>
        </authorList>
    </citation>
    <scope>GENOME REANNOTATION</scope>
    <source>
        <strain>cv. Nipponbare</strain>
    </source>
</reference>
<reference key="5">
    <citation type="journal article" date="2003" name="Science">
        <title>Collection, mapping, and annotation of over 28,000 cDNA clones from japonica rice.</title>
        <authorList>
            <consortium name="The rice full-length cDNA consortium"/>
        </authorList>
    </citation>
    <scope>NUCLEOTIDE SEQUENCE [LARGE SCALE MRNA]</scope>
    <source>
        <strain>cv. Nipponbare</strain>
    </source>
</reference>
<protein>
    <recommendedName>
        <fullName>Pyruvate dehydrogenase E1 component subunit beta-3, chloroplastic</fullName>
        <ecNumber>1.2.4.1</ecNumber>
    </recommendedName>
</protein>
<dbReference type="EC" id="1.2.4.1"/>
<dbReference type="EMBL" id="DP000011">
    <property type="protein sequence ID" value="ABA99864.1"/>
    <property type="molecule type" value="Genomic_DNA"/>
</dbReference>
<dbReference type="EMBL" id="AP008218">
    <property type="protein sequence ID" value="BAF30304.1"/>
    <property type="molecule type" value="Genomic_DNA"/>
</dbReference>
<dbReference type="EMBL" id="AP014968">
    <property type="protein sequence ID" value="BAT18104.1"/>
    <property type="molecule type" value="Genomic_DNA"/>
</dbReference>
<dbReference type="EMBL" id="AK063753">
    <property type="protein sequence ID" value="BAG88853.1"/>
    <property type="molecule type" value="mRNA"/>
</dbReference>
<dbReference type="EMBL" id="AK101464">
    <property type="protein sequence ID" value="BAG95077.1"/>
    <property type="molecule type" value="mRNA"/>
</dbReference>
<dbReference type="RefSeq" id="XP_015620613.1">
    <property type="nucleotide sequence ID" value="XM_015765127.1"/>
</dbReference>
<dbReference type="SMR" id="Q2QM55"/>
<dbReference type="FunCoup" id="Q2QM55">
    <property type="interactions" value="333"/>
</dbReference>
<dbReference type="STRING" id="39947.Q2QM55"/>
<dbReference type="PaxDb" id="39947-Q2QM55"/>
<dbReference type="EnsemblPlants" id="Os12t0616900-01">
    <property type="protein sequence ID" value="Os12t0616900-01"/>
    <property type="gene ID" value="Os12g0616900"/>
</dbReference>
<dbReference type="Gramene" id="Os12t0616900-01">
    <property type="protein sequence ID" value="Os12t0616900-01"/>
    <property type="gene ID" value="Os12g0616900"/>
</dbReference>
<dbReference type="KEGG" id="dosa:Os12g0616900"/>
<dbReference type="eggNOG" id="KOG0524">
    <property type="taxonomic scope" value="Eukaryota"/>
</dbReference>
<dbReference type="HOGENOM" id="CLU_012907_1_1_1"/>
<dbReference type="InParanoid" id="Q2QM55"/>
<dbReference type="OMA" id="VRLCTKD"/>
<dbReference type="OrthoDB" id="10266385at2759"/>
<dbReference type="Proteomes" id="UP000000763">
    <property type="component" value="Chromosome 12"/>
</dbReference>
<dbReference type="Proteomes" id="UP000059680">
    <property type="component" value="Chromosome 12"/>
</dbReference>
<dbReference type="GO" id="GO:0009507">
    <property type="term" value="C:chloroplast"/>
    <property type="evidence" value="ECO:0007669"/>
    <property type="project" value="UniProtKB-SubCell"/>
</dbReference>
<dbReference type="GO" id="GO:0046872">
    <property type="term" value="F:metal ion binding"/>
    <property type="evidence" value="ECO:0007669"/>
    <property type="project" value="UniProtKB-KW"/>
</dbReference>
<dbReference type="GO" id="GO:0004739">
    <property type="term" value="F:pyruvate dehydrogenase (acetyl-transferring) activity"/>
    <property type="evidence" value="ECO:0000318"/>
    <property type="project" value="GO_Central"/>
</dbReference>
<dbReference type="GO" id="GO:0006086">
    <property type="term" value="P:pyruvate decarboxylation to acetyl-CoA"/>
    <property type="evidence" value="ECO:0000318"/>
    <property type="project" value="GO_Central"/>
</dbReference>
<dbReference type="CDD" id="cd07036">
    <property type="entry name" value="TPP_PYR_E1-PDHc-beta_like"/>
    <property type="match status" value="1"/>
</dbReference>
<dbReference type="FunFam" id="3.40.50.970:FF:000001">
    <property type="entry name" value="Pyruvate dehydrogenase E1 beta subunit"/>
    <property type="match status" value="1"/>
</dbReference>
<dbReference type="FunFam" id="3.40.50.920:FF:000006">
    <property type="entry name" value="Pyruvate dehydrogenase E1 component subunit beta"/>
    <property type="match status" value="1"/>
</dbReference>
<dbReference type="Gene3D" id="3.40.50.920">
    <property type="match status" value="1"/>
</dbReference>
<dbReference type="Gene3D" id="3.40.50.970">
    <property type="match status" value="1"/>
</dbReference>
<dbReference type="InterPro" id="IPR029061">
    <property type="entry name" value="THDP-binding"/>
</dbReference>
<dbReference type="InterPro" id="IPR009014">
    <property type="entry name" value="Transketo_C/PFOR_II"/>
</dbReference>
<dbReference type="InterPro" id="IPR005475">
    <property type="entry name" value="Transketolase-like_Pyr-bd"/>
</dbReference>
<dbReference type="InterPro" id="IPR033248">
    <property type="entry name" value="Transketolase_C"/>
</dbReference>
<dbReference type="NCBIfam" id="NF006667">
    <property type="entry name" value="PRK09212.1"/>
    <property type="match status" value="1"/>
</dbReference>
<dbReference type="PANTHER" id="PTHR43257">
    <property type="entry name" value="PYRUVATE DEHYDROGENASE E1 COMPONENT BETA SUBUNIT"/>
    <property type="match status" value="1"/>
</dbReference>
<dbReference type="PANTHER" id="PTHR43257:SF2">
    <property type="entry name" value="PYRUVATE DEHYDROGENASE E1 COMPONENT SUBUNIT BETA"/>
    <property type="match status" value="1"/>
</dbReference>
<dbReference type="Pfam" id="PF02779">
    <property type="entry name" value="Transket_pyr"/>
    <property type="match status" value="1"/>
</dbReference>
<dbReference type="Pfam" id="PF02780">
    <property type="entry name" value="Transketolase_C"/>
    <property type="match status" value="1"/>
</dbReference>
<dbReference type="SMART" id="SM00861">
    <property type="entry name" value="Transket_pyr"/>
    <property type="match status" value="1"/>
</dbReference>
<dbReference type="SUPFAM" id="SSF52518">
    <property type="entry name" value="Thiamin diphosphate-binding fold (THDP-binding)"/>
    <property type="match status" value="1"/>
</dbReference>
<dbReference type="SUPFAM" id="SSF52922">
    <property type="entry name" value="TK C-terminal domain-like"/>
    <property type="match status" value="1"/>
</dbReference>
<gene>
    <name type="ordered locus">Os12g0616900</name>
    <name type="ordered locus">LOC_Os12g42230</name>
</gene>
<keyword id="KW-0150">Chloroplast</keyword>
<keyword id="KW-0479">Metal-binding</keyword>
<keyword id="KW-0560">Oxidoreductase</keyword>
<keyword id="KW-0934">Plastid</keyword>
<keyword id="KW-0630">Potassium</keyword>
<keyword id="KW-0670">Pyruvate</keyword>
<keyword id="KW-1185">Reference proteome</keyword>
<keyword id="KW-0786">Thiamine pyrophosphate</keyword>
<keyword id="KW-0809">Transit peptide</keyword>
<comment type="function">
    <text evidence="1">The pyruvate dehydrogenase complex catalyzes the overall conversion of pyruvate to acetyl-CoA and CO(2). It contains multiple copies of three enzymatic components: pyruvate dehydrogenase (E1), dihydrolipoamide acetyltransferase (E2) and lipoamide dehydrogenase (E3) (By similarity).</text>
</comment>
<comment type="catalytic activity">
    <reaction>
        <text>N(6)-[(R)-lipoyl]-L-lysyl-[protein] + pyruvate + H(+) = N(6)-[(R)-S(8)-acetyldihydrolipoyl]-L-lysyl-[protein] + CO2</text>
        <dbReference type="Rhea" id="RHEA:19189"/>
        <dbReference type="Rhea" id="RHEA-COMP:10474"/>
        <dbReference type="Rhea" id="RHEA-COMP:10478"/>
        <dbReference type="ChEBI" id="CHEBI:15361"/>
        <dbReference type="ChEBI" id="CHEBI:15378"/>
        <dbReference type="ChEBI" id="CHEBI:16526"/>
        <dbReference type="ChEBI" id="CHEBI:83099"/>
        <dbReference type="ChEBI" id="CHEBI:83111"/>
        <dbReference type="EC" id="1.2.4.1"/>
    </reaction>
</comment>
<comment type="cofactor">
    <cofactor evidence="2">
        <name>thiamine diphosphate</name>
        <dbReference type="ChEBI" id="CHEBI:58937"/>
    </cofactor>
</comment>
<comment type="subunit">
    <text evidence="1">Tetramer of 2 alpha and 2 beta subunits.</text>
</comment>
<comment type="subcellular location">
    <subcellularLocation>
        <location evidence="4">Plastid</location>
        <location evidence="4">Chloroplast</location>
    </subcellularLocation>
</comment>